<protein>
    <recommendedName>
        <fullName evidence="5">Auxin-responsive protein SAUR20</fullName>
    </recommendedName>
    <alternativeName>
        <fullName evidence="4">Protein SMALL AUXIN UP RNA 20</fullName>
    </alternativeName>
</protein>
<keyword id="KW-0927">Auxin signaling pathway</keyword>
<keyword id="KW-1003">Cell membrane</keyword>
<keyword id="KW-0217">Developmental protein</keyword>
<keyword id="KW-0341">Growth regulation</keyword>
<keyword id="KW-0472">Membrane</keyword>
<keyword id="KW-1185">Reference proteome</keyword>
<gene>
    <name evidence="4" type="primary">SAUR20</name>
    <name evidence="6" type="ordered locus">At5g18020</name>
    <name evidence="7" type="ORF">MCM23.11</name>
</gene>
<reference key="1">
    <citation type="journal article" date="1998" name="DNA Res.">
        <title>Structural analysis of Arabidopsis thaliana chromosome 5. VII. Sequence features of the regions of 1,013,767 bp covered by sixteen physically assigned P1 and TAC clones.</title>
        <authorList>
            <person name="Nakamura Y."/>
            <person name="Sato S."/>
            <person name="Asamizu E."/>
            <person name="Kaneko T."/>
            <person name="Kotani H."/>
            <person name="Miyajima N."/>
            <person name="Tabata S."/>
        </authorList>
    </citation>
    <scope>NUCLEOTIDE SEQUENCE [LARGE SCALE GENOMIC DNA]</scope>
    <source>
        <strain>cv. Columbia</strain>
    </source>
</reference>
<reference key="2">
    <citation type="journal article" date="2017" name="Plant J.">
        <title>Araport11: a complete reannotation of the Arabidopsis thaliana reference genome.</title>
        <authorList>
            <person name="Cheng C.Y."/>
            <person name="Krishnakumar V."/>
            <person name="Chan A.P."/>
            <person name="Thibaud-Nissen F."/>
            <person name="Schobel S."/>
            <person name="Town C.D."/>
        </authorList>
    </citation>
    <scope>GENOME REANNOTATION</scope>
    <source>
        <strain>cv. Columbia</strain>
    </source>
</reference>
<reference key="3">
    <citation type="journal article" date="2002" name="Science">
        <title>Functional annotation of a full-length Arabidopsis cDNA collection.</title>
        <authorList>
            <person name="Seki M."/>
            <person name="Narusaka M."/>
            <person name="Kamiya A."/>
            <person name="Ishida J."/>
            <person name="Satou M."/>
            <person name="Sakurai T."/>
            <person name="Nakajima M."/>
            <person name="Enju A."/>
            <person name="Akiyama K."/>
            <person name="Oono Y."/>
            <person name="Muramatsu M."/>
            <person name="Hayashizaki Y."/>
            <person name="Kawai J."/>
            <person name="Carninci P."/>
            <person name="Itoh M."/>
            <person name="Ishii Y."/>
            <person name="Arakawa T."/>
            <person name="Shibata K."/>
            <person name="Shinagawa A."/>
            <person name="Shinozaki K."/>
        </authorList>
    </citation>
    <scope>NUCLEOTIDE SEQUENCE [LARGE SCALE MRNA]</scope>
    <source>
        <strain>cv. Columbia</strain>
    </source>
</reference>
<reference key="4">
    <citation type="journal article" date="2003" name="Science">
        <title>Empirical analysis of transcriptional activity in the Arabidopsis genome.</title>
        <authorList>
            <person name="Yamada K."/>
            <person name="Lim J."/>
            <person name="Dale J.M."/>
            <person name="Chen H."/>
            <person name="Shinn P."/>
            <person name="Palm C.J."/>
            <person name="Southwick A.M."/>
            <person name="Wu H.C."/>
            <person name="Kim C.J."/>
            <person name="Nguyen M."/>
            <person name="Pham P.K."/>
            <person name="Cheuk R.F."/>
            <person name="Karlin-Newmann G."/>
            <person name="Liu S.X."/>
            <person name="Lam B."/>
            <person name="Sakano H."/>
            <person name="Wu T."/>
            <person name="Yu G."/>
            <person name="Miranda M."/>
            <person name="Quach H.L."/>
            <person name="Tripp M."/>
            <person name="Chang C.H."/>
            <person name="Lee J.M."/>
            <person name="Toriumi M.J."/>
            <person name="Chan M.M."/>
            <person name="Tang C.C."/>
            <person name="Onodera C.S."/>
            <person name="Deng J.M."/>
            <person name="Akiyama K."/>
            <person name="Ansari Y."/>
            <person name="Arakawa T."/>
            <person name="Banh J."/>
            <person name="Banno F."/>
            <person name="Bowser L."/>
            <person name="Brooks S.Y."/>
            <person name="Carninci P."/>
            <person name="Chao Q."/>
            <person name="Choy N."/>
            <person name="Enju A."/>
            <person name="Goldsmith A.D."/>
            <person name="Gurjal M."/>
            <person name="Hansen N.F."/>
            <person name="Hayashizaki Y."/>
            <person name="Johnson-Hopson C."/>
            <person name="Hsuan V.W."/>
            <person name="Iida K."/>
            <person name="Karnes M."/>
            <person name="Khan S."/>
            <person name="Koesema E."/>
            <person name="Ishida J."/>
            <person name="Jiang P.X."/>
            <person name="Jones T."/>
            <person name="Kawai J."/>
            <person name="Kamiya A."/>
            <person name="Meyers C."/>
            <person name="Nakajima M."/>
            <person name="Narusaka M."/>
            <person name="Seki M."/>
            <person name="Sakurai T."/>
            <person name="Satou M."/>
            <person name="Tamse R."/>
            <person name="Vaysberg M."/>
            <person name="Wallender E.K."/>
            <person name="Wong C."/>
            <person name="Yamamura Y."/>
            <person name="Yuan S."/>
            <person name="Shinozaki K."/>
            <person name="Davis R.W."/>
            <person name="Theologis A."/>
            <person name="Ecker J.R."/>
        </authorList>
    </citation>
    <scope>NUCLEOTIDE SEQUENCE [LARGE SCALE MRNA]</scope>
    <source>
        <strain>cv. Columbia</strain>
    </source>
</reference>
<reference key="5">
    <citation type="journal article" date="2002" name="Plant Mol. Biol.">
        <title>Auxin-responsive gene expression: genes, promoters and regulatory factors.</title>
        <authorList>
            <person name="Hagen G."/>
            <person name="Guilfoyle T.J."/>
        </authorList>
    </citation>
    <scope>GENE FAMILY</scope>
    <scope>NOMENCLATURE</scope>
</reference>
<reference key="6">
    <citation type="journal article" date="2012" name="Plant J.">
        <title>The SAUR19 subfamily of SMALL AUXIN UP RNA genes promote cell expansion.</title>
        <authorList>
            <person name="Spartz A.K."/>
            <person name="Lee S.H."/>
            <person name="Wenger J.P."/>
            <person name="Gonzalez N."/>
            <person name="Itoh H."/>
            <person name="Inze D."/>
            <person name="Peer W.A."/>
            <person name="Murphy A.S."/>
            <person name="Overvoorde P.J."/>
            <person name="Gray W.M."/>
        </authorList>
    </citation>
    <scope>INDUCTION BY AUXIN</scope>
</reference>
<reference key="7">
    <citation type="journal article" date="2017" name="Plant Physiol.">
        <title>Constitutive expression of Arabidopsis SMALL AUXIN UP RNA19 (SAUR19) in tomato confers auxin-independent hypocotyl elongation.</title>
        <authorList>
            <person name="Spartz A.K."/>
            <person name="Lor V.S."/>
            <person name="Ren H."/>
            <person name="Olszewski N.E."/>
            <person name="Miller N.D."/>
            <person name="Wu G."/>
            <person name="Spalding E.P."/>
            <person name="Gray W.M."/>
        </authorList>
    </citation>
    <scope>INDUCTION BY AUXIN</scope>
</reference>
<organism>
    <name type="scientific">Arabidopsis thaliana</name>
    <name type="common">Mouse-ear cress</name>
    <dbReference type="NCBI Taxonomy" id="3702"/>
    <lineage>
        <taxon>Eukaryota</taxon>
        <taxon>Viridiplantae</taxon>
        <taxon>Streptophyta</taxon>
        <taxon>Embryophyta</taxon>
        <taxon>Tracheophyta</taxon>
        <taxon>Spermatophyta</taxon>
        <taxon>Magnoliopsida</taxon>
        <taxon>eudicotyledons</taxon>
        <taxon>Gunneridae</taxon>
        <taxon>Pentapetalae</taxon>
        <taxon>rosids</taxon>
        <taxon>malvids</taxon>
        <taxon>Brassicales</taxon>
        <taxon>Brassicaceae</taxon>
        <taxon>Camelineae</taxon>
        <taxon>Arabidopsis</taxon>
    </lineage>
</organism>
<accession>Q9FJG0</accession>
<feature type="chain" id="PRO_0000433062" description="Auxin-responsive protein SAUR20">
    <location>
        <begin position="1"/>
        <end position="91"/>
    </location>
</feature>
<sequence>MAFVRSLLGAKKILSRSTTAASAAPKGFLAVYVGESQKKRYLVPISYLNQPSFQALLSKSEEEFGFDHPMGGLTIPCPEDTFINVTSRFQR</sequence>
<dbReference type="EMBL" id="AB015473">
    <property type="protein sequence ID" value="BAB08401.1"/>
    <property type="molecule type" value="Genomic_DNA"/>
</dbReference>
<dbReference type="EMBL" id="CP002688">
    <property type="protein sequence ID" value="AED92496.1"/>
    <property type="molecule type" value="Genomic_DNA"/>
</dbReference>
<dbReference type="EMBL" id="AK117211">
    <property type="protein sequence ID" value="BAC41887.1"/>
    <property type="molecule type" value="mRNA"/>
</dbReference>
<dbReference type="EMBL" id="BT004677">
    <property type="protein sequence ID" value="AAO42923.1"/>
    <property type="molecule type" value="mRNA"/>
</dbReference>
<dbReference type="RefSeq" id="NP_197303.1">
    <property type="nucleotide sequence ID" value="NM_121807.2"/>
</dbReference>
<dbReference type="SMR" id="Q9FJG0"/>
<dbReference type="FunCoup" id="Q9FJG0">
    <property type="interactions" value="302"/>
</dbReference>
<dbReference type="IntAct" id="Q9FJG0">
    <property type="interactions" value="2"/>
</dbReference>
<dbReference type="STRING" id="3702.Q9FJG0"/>
<dbReference type="PaxDb" id="3702-AT5G18020.1"/>
<dbReference type="ProMEX" id="Q9FJG0"/>
<dbReference type="EnsemblPlants" id="AT5G18020.1">
    <property type="protein sequence ID" value="AT5G18020.1"/>
    <property type="gene ID" value="AT5G18020"/>
</dbReference>
<dbReference type="GeneID" id="831669"/>
<dbReference type="Gramene" id="AT5G18020.1">
    <property type="protein sequence ID" value="AT5G18020.1"/>
    <property type="gene ID" value="AT5G18020"/>
</dbReference>
<dbReference type="KEGG" id="ath:AT5G18020"/>
<dbReference type="Araport" id="AT5G18020"/>
<dbReference type="TAIR" id="AT5G18020">
    <property type="gene designation" value="SAUR20"/>
</dbReference>
<dbReference type="eggNOG" id="ENOG502STBD">
    <property type="taxonomic scope" value="Eukaryota"/>
</dbReference>
<dbReference type="HOGENOM" id="CLU_098106_3_0_1"/>
<dbReference type="InParanoid" id="Q9FJG0"/>
<dbReference type="OMA" id="AINMPRI"/>
<dbReference type="PhylomeDB" id="Q9FJG0"/>
<dbReference type="PRO" id="PR:Q9FJG0"/>
<dbReference type="Proteomes" id="UP000006548">
    <property type="component" value="Chromosome 5"/>
</dbReference>
<dbReference type="ExpressionAtlas" id="Q9FJG0">
    <property type="expression patterns" value="baseline and differential"/>
</dbReference>
<dbReference type="GO" id="GO:0005886">
    <property type="term" value="C:plasma membrane"/>
    <property type="evidence" value="ECO:0007669"/>
    <property type="project" value="UniProtKB-SubCell"/>
</dbReference>
<dbReference type="GO" id="GO:0009734">
    <property type="term" value="P:auxin-activated signaling pathway"/>
    <property type="evidence" value="ECO:0007669"/>
    <property type="project" value="UniProtKB-KW"/>
</dbReference>
<dbReference type="GO" id="GO:0009733">
    <property type="term" value="P:response to auxin"/>
    <property type="evidence" value="ECO:0000270"/>
    <property type="project" value="UniProtKB"/>
</dbReference>
<dbReference type="InterPro" id="IPR003676">
    <property type="entry name" value="SAUR_fam"/>
</dbReference>
<dbReference type="PANTHER" id="PTHR31929">
    <property type="entry name" value="SAUR-LIKE AUXIN-RESPONSIVE PROTEIN FAMILY-RELATED"/>
    <property type="match status" value="1"/>
</dbReference>
<dbReference type="Pfam" id="PF02519">
    <property type="entry name" value="Auxin_inducible"/>
    <property type="match status" value="1"/>
</dbReference>
<comment type="function">
    <text evidence="1">Functions as a positive effector of cell expansion through modulation of auxin transport.</text>
</comment>
<comment type="interaction">
    <interactant intactId="EBI-25522374">
        <id>Q9FJG0</id>
    </interactant>
    <interactant intactId="EBI-25517797">
        <id>Q0V7V2</id>
        <label>PP2C42</label>
    </interactant>
    <organismsDiffer>false</organismsDiffer>
    <experiments>3</experiments>
</comment>
<comment type="interaction">
    <interactant intactId="EBI-25522374">
        <id>Q9FJG0</id>
    </interactant>
    <interactant intactId="EBI-25520600">
        <id>Q501F9</id>
        <label>PP2C67</label>
    </interactant>
    <organismsDiffer>false</organismsDiffer>
    <experiments>3</experiments>
</comment>
<comment type="subcellular location">
    <subcellularLocation>
        <location evidence="1">Cell membrane</location>
        <topology evidence="1">Peripheral membrane protein</topology>
    </subcellularLocation>
</comment>
<comment type="induction">
    <text evidence="2 3">Strongly induced by auxin.</text>
</comment>
<comment type="similarity">
    <text evidence="5">Belongs to the ARG7 family.</text>
</comment>
<evidence type="ECO:0000250" key="1">
    <source>
        <dbReference type="UniProtKB" id="Q9FJG1"/>
    </source>
</evidence>
<evidence type="ECO:0000269" key="2">
    <source>
    </source>
</evidence>
<evidence type="ECO:0000269" key="3">
    <source>
    </source>
</evidence>
<evidence type="ECO:0000303" key="4">
    <source>
    </source>
</evidence>
<evidence type="ECO:0000305" key="5"/>
<evidence type="ECO:0000312" key="6">
    <source>
        <dbReference type="Araport" id="AT5G18020"/>
    </source>
</evidence>
<evidence type="ECO:0000312" key="7">
    <source>
        <dbReference type="EMBL" id="BAB08401.1"/>
    </source>
</evidence>
<name>SAU20_ARATH</name>
<proteinExistence type="evidence at protein level"/>